<keyword id="KW-0687">Ribonucleoprotein</keyword>
<keyword id="KW-0689">Ribosomal protein</keyword>
<keyword id="KW-0694">RNA-binding</keyword>
<keyword id="KW-0699">rRNA-binding</keyword>
<protein>
    <recommendedName>
        <fullName evidence="1">Large ribosomal subunit protein uL18</fullName>
    </recommendedName>
    <alternativeName>
        <fullName evidence="2">50S ribosomal protein L18</fullName>
    </alternativeName>
</protein>
<sequence length="119" mass="13025">MAKHVTTREKRRARIRRKISGTELRPRLTIYKSLKHMYAQLVDDVAGKTLVSVATTSKSLKGELGDEDKTAAAKKVGEALAKAAKAKGIEQVVFDRNGFDYHGRVEAVAAAAREAGLKF</sequence>
<evidence type="ECO:0000255" key="1">
    <source>
        <dbReference type="HAMAP-Rule" id="MF_01337"/>
    </source>
</evidence>
<evidence type="ECO:0000305" key="2"/>
<gene>
    <name evidence="1" type="primary">rplR</name>
    <name type="ordered locus">A2cp1_2034</name>
</gene>
<name>RL18_ANAD2</name>
<reference key="1">
    <citation type="submission" date="2009-01" db="EMBL/GenBank/DDBJ databases">
        <title>Complete sequence of Anaeromyxobacter dehalogenans 2CP-1.</title>
        <authorList>
            <person name="Lucas S."/>
            <person name="Copeland A."/>
            <person name="Lapidus A."/>
            <person name="Glavina del Rio T."/>
            <person name="Dalin E."/>
            <person name="Tice H."/>
            <person name="Bruce D."/>
            <person name="Goodwin L."/>
            <person name="Pitluck S."/>
            <person name="Saunders E."/>
            <person name="Brettin T."/>
            <person name="Detter J.C."/>
            <person name="Han C."/>
            <person name="Larimer F."/>
            <person name="Land M."/>
            <person name="Hauser L."/>
            <person name="Kyrpides N."/>
            <person name="Ovchinnikova G."/>
            <person name="Beliaev A.S."/>
            <person name="Richardson P."/>
        </authorList>
    </citation>
    <scope>NUCLEOTIDE SEQUENCE [LARGE SCALE GENOMIC DNA]</scope>
    <source>
        <strain>2CP-1 / ATCC BAA-258</strain>
    </source>
</reference>
<proteinExistence type="inferred from homology"/>
<comment type="function">
    <text evidence="1">This is one of the proteins that bind and probably mediate the attachment of the 5S RNA into the large ribosomal subunit, where it forms part of the central protuberance.</text>
</comment>
<comment type="subunit">
    <text evidence="1">Part of the 50S ribosomal subunit; part of the 5S rRNA/L5/L18/L25 subcomplex. Contacts the 5S and 23S rRNAs.</text>
</comment>
<comment type="similarity">
    <text evidence="1">Belongs to the universal ribosomal protein uL18 family.</text>
</comment>
<dbReference type="EMBL" id="CP001359">
    <property type="protein sequence ID" value="ACL65375.1"/>
    <property type="molecule type" value="Genomic_DNA"/>
</dbReference>
<dbReference type="RefSeq" id="WP_012525983.1">
    <property type="nucleotide sequence ID" value="NC_011891.1"/>
</dbReference>
<dbReference type="SMR" id="B8J876"/>
<dbReference type="KEGG" id="acp:A2cp1_2034"/>
<dbReference type="HOGENOM" id="CLU_098841_0_1_7"/>
<dbReference type="Proteomes" id="UP000007089">
    <property type="component" value="Chromosome"/>
</dbReference>
<dbReference type="GO" id="GO:0022625">
    <property type="term" value="C:cytosolic large ribosomal subunit"/>
    <property type="evidence" value="ECO:0007669"/>
    <property type="project" value="TreeGrafter"/>
</dbReference>
<dbReference type="GO" id="GO:0008097">
    <property type="term" value="F:5S rRNA binding"/>
    <property type="evidence" value="ECO:0007669"/>
    <property type="project" value="TreeGrafter"/>
</dbReference>
<dbReference type="GO" id="GO:0003735">
    <property type="term" value="F:structural constituent of ribosome"/>
    <property type="evidence" value="ECO:0007669"/>
    <property type="project" value="InterPro"/>
</dbReference>
<dbReference type="GO" id="GO:0006412">
    <property type="term" value="P:translation"/>
    <property type="evidence" value="ECO:0007669"/>
    <property type="project" value="UniProtKB-UniRule"/>
</dbReference>
<dbReference type="CDD" id="cd00432">
    <property type="entry name" value="Ribosomal_L18_L5e"/>
    <property type="match status" value="1"/>
</dbReference>
<dbReference type="FunFam" id="3.30.420.100:FF:000001">
    <property type="entry name" value="50S ribosomal protein L18"/>
    <property type="match status" value="1"/>
</dbReference>
<dbReference type="Gene3D" id="3.30.420.100">
    <property type="match status" value="1"/>
</dbReference>
<dbReference type="HAMAP" id="MF_01337_B">
    <property type="entry name" value="Ribosomal_uL18_B"/>
    <property type="match status" value="1"/>
</dbReference>
<dbReference type="InterPro" id="IPR004389">
    <property type="entry name" value="Ribosomal_uL18_bac-type"/>
</dbReference>
<dbReference type="InterPro" id="IPR005484">
    <property type="entry name" value="Ribosomal_uL18_bac/euk"/>
</dbReference>
<dbReference type="NCBIfam" id="TIGR00060">
    <property type="entry name" value="L18_bact"/>
    <property type="match status" value="1"/>
</dbReference>
<dbReference type="PANTHER" id="PTHR12899">
    <property type="entry name" value="39S RIBOSOMAL PROTEIN L18, MITOCHONDRIAL"/>
    <property type="match status" value="1"/>
</dbReference>
<dbReference type="PANTHER" id="PTHR12899:SF3">
    <property type="entry name" value="LARGE RIBOSOMAL SUBUNIT PROTEIN UL18M"/>
    <property type="match status" value="1"/>
</dbReference>
<dbReference type="Pfam" id="PF00861">
    <property type="entry name" value="Ribosomal_L18p"/>
    <property type="match status" value="1"/>
</dbReference>
<dbReference type="SUPFAM" id="SSF53137">
    <property type="entry name" value="Translational machinery components"/>
    <property type="match status" value="1"/>
</dbReference>
<accession>B8J876</accession>
<feature type="chain" id="PRO_1000166201" description="Large ribosomal subunit protein uL18">
    <location>
        <begin position="1"/>
        <end position="119"/>
    </location>
</feature>
<organism>
    <name type="scientific">Anaeromyxobacter dehalogenans (strain 2CP-1 / ATCC BAA-258)</name>
    <dbReference type="NCBI Taxonomy" id="455488"/>
    <lineage>
        <taxon>Bacteria</taxon>
        <taxon>Pseudomonadati</taxon>
        <taxon>Myxococcota</taxon>
        <taxon>Myxococcia</taxon>
        <taxon>Myxococcales</taxon>
        <taxon>Cystobacterineae</taxon>
        <taxon>Anaeromyxobacteraceae</taxon>
        <taxon>Anaeromyxobacter</taxon>
    </lineage>
</organism>